<evidence type="ECO:0000250" key="1">
    <source>
        <dbReference type="UniProtKB" id="P53861"/>
    </source>
</evidence>
<evidence type="ECO:0000256" key="2">
    <source>
        <dbReference type="SAM" id="MobiDB-lite"/>
    </source>
</evidence>
<evidence type="ECO:0000269" key="3">
    <source>
    </source>
</evidence>
<evidence type="ECO:0000305" key="4"/>
<evidence type="ECO:0000312" key="5">
    <source>
        <dbReference type="PomBase" id="SPBC29A3.08"/>
    </source>
</evidence>
<proteinExistence type="evidence at protein level"/>
<feature type="chain" id="PRO_0000058505" description="Elongin-A">
    <location>
        <begin position="1"/>
        <end position="263"/>
    </location>
</feature>
<feature type="region of interest" description="Disordered" evidence="2">
    <location>
        <begin position="112"/>
        <end position="147"/>
    </location>
</feature>
<feature type="region of interest" description="Disordered" evidence="2">
    <location>
        <begin position="170"/>
        <end position="263"/>
    </location>
</feature>
<feature type="compositionally biased region" description="Polar residues" evidence="2">
    <location>
        <begin position="186"/>
        <end position="206"/>
    </location>
</feature>
<feature type="compositionally biased region" description="Polar residues" evidence="2">
    <location>
        <begin position="214"/>
        <end position="229"/>
    </location>
</feature>
<feature type="compositionally biased region" description="Low complexity" evidence="2">
    <location>
        <begin position="230"/>
        <end position="245"/>
    </location>
</feature>
<feature type="compositionally biased region" description="Polar residues" evidence="2">
    <location>
        <begin position="253"/>
        <end position="263"/>
    </location>
</feature>
<protein>
    <recommendedName>
        <fullName>Elongin-A</fullName>
    </recommendedName>
    <alternativeName>
        <fullName>Protein pof4</fullName>
    </alternativeName>
</protein>
<dbReference type="EMBL" id="CU329671">
    <property type="protein sequence ID" value="CAK9840136.1"/>
    <property type="molecule type" value="Genomic_DNA"/>
</dbReference>
<dbReference type="PIR" id="T40079">
    <property type="entry name" value="T40079"/>
</dbReference>
<dbReference type="RefSeq" id="NP_595836.2">
    <property type="nucleotide sequence ID" value="NM_001021740.2"/>
</dbReference>
<dbReference type="SMR" id="O59671"/>
<dbReference type="FunCoup" id="O59671">
    <property type="interactions" value="34"/>
</dbReference>
<dbReference type="IntAct" id="O59671">
    <property type="interactions" value="1"/>
</dbReference>
<dbReference type="STRING" id="284812.O59671"/>
<dbReference type="iPTMnet" id="O59671"/>
<dbReference type="PaxDb" id="4896-SPBC29A3.08.1"/>
<dbReference type="GeneID" id="2540513"/>
<dbReference type="KEGG" id="spo:2540513"/>
<dbReference type="PomBase" id="SPBC29A3.08">
    <property type="gene designation" value="pof4"/>
</dbReference>
<dbReference type="eggNOG" id="KOG2821">
    <property type="taxonomic scope" value="Eukaryota"/>
</dbReference>
<dbReference type="InParanoid" id="O59671"/>
<dbReference type="PRO" id="PR:O59671"/>
<dbReference type="Proteomes" id="UP000002485">
    <property type="component" value="Chromosome II"/>
</dbReference>
<dbReference type="GO" id="GO:0070449">
    <property type="term" value="C:elongin complex"/>
    <property type="evidence" value="ECO:0007669"/>
    <property type="project" value="InterPro"/>
</dbReference>
<dbReference type="GO" id="GO:0003711">
    <property type="term" value="F:transcription elongation factor activity"/>
    <property type="evidence" value="ECO:0000305"/>
    <property type="project" value="PomBase"/>
</dbReference>
<dbReference type="GO" id="GO:0006368">
    <property type="term" value="P:transcription elongation by RNA polymerase II"/>
    <property type="evidence" value="ECO:0007669"/>
    <property type="project" value="InterPro"/>
</dbReference>
<dbReference type="GO" id="GO:0006367">
    <property type="term" value="P:transcription initiation at RNA polymerase II promoter"/>
    <property type="evidence" value="ECO:0000305"/>
    <property type="project" value="PomBase"/>
</dbReference>
<dbReference type="Gene3D" id="6.10.250.3180">
    <property type="match status" value="1"/>
</dbReference>
<dbReference type="InterPro" id="IPR051870">
    <property type="entry name" value="Elongin-A_domain"/>
</dbReference>
<dbReference type="InterPro" id="IPR010684">
    <property type="entry name" value="RNA_pol_II_trans_fac_SIII_A"/>
</dbReference>
<dbReference type="PANTHER" id="PTHR15141">
    <property type="entry name" value="TRANSCRIPTION ELONGATION FACTOR B POLYPEPTIDE 3"/>
    <property type="match status" value="1"/>
</dbReference>
<dbReference type="PANTHER" id="PTHR15141:SF76">
    <property type="entry name" value="TRANSCRIPTION ELONGATION FACTOR B POLYPEPTIDE 3"/>
    <property type="match status" value="1"/>
</dbReference>
<dbReference type="Pfam" id="PF06881">
    <property type="entry name" value="Elongin_A"/>
    <property type="match status" value="1"/>
</dbReference>
<organism>
    <name type="scientific">Schizosaccharomyces pombe (strain 972 / ATCC 24843)</name>
    <name type="common">Fission yeast</name>
    <dbReference type="NCBI Taxonomy" id="284812"/>
    <lineage>
        <taxon>Eukaryota</taxon>
        <taxon>Fungi</taxon>
        <taxon>Dikarya</taxon>
        <taxon>Ascomycota</taxon>
        <taxon>Taphrinomycotina</taxon>
        <taxon>Schizosaccharomycetes</taxon>
        <taxon>Schizosaccharomycetales</taxon>
        <taxon>Schizosaccharomycetaceae</taxon>
        <taxon>Schizosaccharomyces</taxon>
    </lineage>
</organism>
<reference key="1">
    <citation type="journal article" date="2002" name="Nature">
        <title>The genome sequence of Schizosaccharomyces pombe.</title>
        <authorList>
            <person name="Wood V."/>
            <person name="Gwilliam R."/>
            <person name="Rajandream M.A."/>
            <person name="Lyne M.H."/>
            <person name="Lyne R."/>
            <person name="Stewart A."/>
            <person name="Sgouros J.G."/>
            <person name="Peat N."/>
            <person name="Hayles J."/>
            <person name="Baker S.G."/>
            <person name="Basham D."/>
            <person name="Bowman S."/>
            <person name="Brooks K."/>
            <person name="Brown D."/>
            <person name="Brown S."/>
            <person name="Chillingworth T."/>
            <person name="Churcher C.M."/>
            <person name="Collins M."/>
            <person name="Connor R."/>
            <person name="Cronin A."/>
            <person name="Davis P."/>
            <person name="Feltwell T."/>
            <person name="Fraser A."/>
            <person name="Gentles S."/>
            <person name="Goble A."/>
            <person name="Hamlin N."/>
            <person name="Harris D.E."/>
            <person name="Hidalgo J."/>
            <person name="Hodgson G."/>
            <person name="Holroyd S."/>
            <person name="Hornsby T."/>
            <person name="Howarth S."/>
            <person name="Huckle E.J."/>
            <person name="Hunt S."/>
            <person name="Jagels K."/>
            <person name="James K.D."/>
            <person name="Jones L."/>
            <person name="Jones M."/>
            <person name="Leather S."/>
            <person name="McDonald S."/>
            <person name="McLean J."/>
            <person name="Mooney P."/>
            <person name="Moule S."/>
            <person name="Mungall K.L."/>
            <person name="Murphy L.D."/>
            <person name="Niblett D."/>
            <person name="Odell C."/>
            <person name="Oliver K."/>
            <person name="O'Neil S."/>
            <person name="Pearson D."/>
            <person name="Quail M.A."/>
            <person name="Rabbinowitsch E."/>
            <person name="Rutherford K.M."/>
            <person name="Rutter S."/>
            <person name="Saunders D."/>
            <person name="Seeger K."/>
            <person name="Sharp S."/>
            <person name="Skelton J."/>
            <person name="Simmonds M.N."/>
            <person name="Squares R."/>
            <person name="Squares S."/>
            <person name="Stevens K."/>
            <person name="Taylor K."/>
            <person name="Taylor R.G."/>
            <person name="Tivey A."/>
            <person name="Walsh S.V."/>
            <person name="Warren T."/>
            <person name="Whitehead S."/>
            <person name="Woodward J.R."/>
            <person name="Volckaert G."/>
            <person name="Aert R."/>
            <person name="Robben J."/>
            <person name="Grymonprez B."/>
            <person name="Weltjens I."/>
            <person name="Vanstreels E."/>
            <person name="Rieger M."/>
            <person name="Schaefer M."/>
            <person name="Mueller-Auer S."/>
            <person name="Gabel C."/>
            <person name="Fuchs M."/>
            <person name="Duesterhoeft A."/>
            <person name="Fritzc C."/>
            <person name="Holzer E."/>
            <person name="Moestl D."/>
            <person name="Hilbert H."/>
            <person name="Borzym K."/>
            <person name="Langer I."/>
            <person name="Beck A."/>
            <person name="Lehrach H."/>
            <person name="Reinhardt R."/>
            <person name="Pohl T.M."/>
            <person name="Eger P."/>
            <person name="Zimmermann W."/>
            <person name="Wedler H."/>
            <person name="Wambutt R."/>
            <person name="Purnelle B."/>
            <person name="Goffeau A."/>
            <person name="Cadieu E."/>
            <person name="Dreano S."/>
            <person name="Gloux S."/>
            <person name="Lelaure V."/>
            <person name="Mottier S."/>
            <person name="Galibert F."/>
            <person name="Aves S.J."/>
            <person name="Xiang Z."/>
            <person name="Hunt C."/>
            <person name="Moore K."/>
            <person name="Hurst S.M."/>
            <person name="Lucas M."/>
            <person name="Rochet M."/>
            <person name="Gaillardin C."/>
            <person name="Tallada V.A."/>
            <person name="Garzon A."/>
            <person name="Thode G."/>
            <person name="Daga R.R."/>
            <person name="Cruzado L."/>
            <person name="Jimenez J."/>
            <person name="Sanchez M."/>
            <person name="del Rey F."/>
            <person name="Benito J."/>
            <person name="Dominguez A."/>
            <person name="Revuelta J.L."/>
            <person name="Moreno S."/>
            <person name="Armstrong J."/>
            <person name="Forsburg S.L."/>
            <person name="Cerutti L."/>
            <person name="Lowe T."/>
            <person name="McCombie W.R."/>
            <person name="Paulsen I."/>
            <person name="Potashkin J."/>
            <person name="Shpakovski G.V."/>
            <person name="Ussery D."/>
            <person name="Barrell B.G."/>
            <person name="Nurse P."/>
        </authorList>
    </citation>
    <scope>NUCLEOTIDE SEQUENCE [LARGE SCALE GENOMIC DNA]</scope>
    <source>
        <strain>972 / ATCC 24843</strain>
    </source>
</reference>
<reference key="2">
    <citation type="journal article" date="2006" name="Nat. Biotechnol.">
        <title>ORFeome cloning and global analysis of protein localization in the fission yeast Schizosaccharomyces pombe.</title>
        <authorList>
            <person name="Matsuyama A."/>
            <person name="Arai R."/>
            <person name="Yashiroda Y."/>
            <person name="Shirai A."/>
            <person name="Kamata A."/>
            <person name="Sekido S."/>
            <person name="Kobayashi Y."/>
            <person name="Hashimoto A."/>
            <person name="Hamamoto M."/>
            <person name="Hiraoka Y."/>
            <person name="Horinouchi S."/>
            <person name="Yoshida M."/>
        </authorList>
    </citation>
    <scope>IDENTIFICATION OF FRAMESHIFT</scope>
    <source>
        <strain>972 / ATCC 24843</strain>
        <strain>JY3</strain>
    </source>
</reference>
<reference key="3">
    <citation type="journal article" date="2004" name="Genes Cells">
        <title>Molecular interactions of fission yeast Skp1 and its role in the DNA damage checkpoint.</title>
        <authorList>
            <person name="Lehmann A."/>
            <person name="Katayama S."/>
            <person name="Harrison C."/>
            <person name="Dhut S."/>
            <person name="Kitamura K."/>
            <person name="McDonald N."/>
            <person name="Toda T."/>
        </authorList>
    </citation>
    <scope>INTERACTION WITH SKP1</scope>
</reference>
<gene>
    <name type="primary">pof4</name>
    <name type="synonym">ela1</name>
    <name evidence="5" type="ORF">SPBC29A3.08</name>
</gene>
<comment type="function">
    <text evidence="1">As part of the CRL3 E3 ubiquitin ligase complex; polyubiquitylates monoubiquitylated RNA polymerase II subunit rpb1 to trigger its proteolysis; plays a role in global genomic repair.</text>
</comment>
<comment type="subunit">
    <text evidence="1 3">Heterodimer with elc1. Component of a CRL3 E3 ubiquitin ligase complex consisting of a cullin, the linker protein elc1, the substrate receptor pof4/ela1, and the RING protein rbx1 (By similarity). Interacts with skp1 (PubMed:15147268).</text>
</comment>
<comment type="similarity">
    <text evidence="4">Belongs to the ELA1 family.</text>
</comment>
<accession>O59671</accession>
<accession>A0AAN2L357</accession>
<keyword id="KW-1185">Reference proteome</keyword>
<sequence length="263" mass="29847">MYSLKDLCIQVAQKHVHDIDDIGDCPFELVKPILEKARPEHLIDLEEKSPHLKVDTQPLWKDHVLRDFGLELQKRTILNNIDDWRGLYGKLKKKRNAHYNVASAKLRSAYTKLEQSKQNKRIVPLEREPRAARPPKRPRPMSNYCPKSSLMARAKSDFLKKASATRHIVSATSSSRSFPQLHPLGRSSSNATNTSTKRPLTSNTYPSIPLPPKSFTSQNFKSFNAVKTQPSSSSSPSISRPTSFPMSFFPNPSRFSSQVPKRI</sequence>
<name>ELOA1_SCHPO</name>